<reference key="1">
    <citation type="journal article" date="2003" name="Proc. Natl. Acad. Sci. U.S.A.">
        <title>Complete genome sequence of the marine planctomycete Pirellula sp. strain 1.</title>
        <authorList>
            <person name="Gloeckner F.O."/>
            <person name="Kube M."/>
            <person name="Bauer M."/>
            <person name="Teeling H."/>
            <person name="Lombardot T."/>
            <person name="Ludwig W."/>
            <person name="Gade D."/>
            <person name="Beck A."/>
            <person name="Borzym K."/>
            <person name="Heitmann K."/>
            <person name="Rabus R."/>
            <person name="Schlesner H."/>
            <person name="Amann R."/>
            <person name="Reinhardt R."/>
        </authorList>
    </citation>
    <scope>NUCLEOTIDE SEQUENCE [LARGE SCALE GENOMIC DNA]</scope>
    <source>
        <strain>DSM 10527 / NCIMB 13988 / SH1</strain>
    </source>
</reference>
<gene>
    <name type="ordered locus">RB9488</name>
</gene>
<feature type="chain" id="PRO_0000157445" description="UPF0324 membrane protein RB9488">
    <location>
        <begin position="1"/>
        <end position="543"/>
    </location>
</feature>
<feature type="transmembrane region" description="Helical" evidence="1">
    <location>
        <begin position="51"/>
        <end position="73"/>
    </location>
</feature>
<feature type="transmembrane region" description="Helical" evidence="1">
    <location>
        <begin position="160"/>
        <end position="182"/>
    </location>
</feature>
<feature type="transmembrane region" description="Helical" evidence="1">
    <location>
        <begin position="189"/>
        <end position="211"/>
    </location>
</feature>
<feature type="transmembrane region" description="Helical" evidence="1">
    <location>
        <begin position="221"/>
        <end position="243"/>
    </location>
</feature>
<feature type="transmembrane region" description="Helical" evidence="1">
    <location>
        <begin position="270"/>
        <end position="292"/>
    </location>
</feature>
<feature type="transmembrane region" description="Helical" evidence="1">
    <location>
        <begin position="307"/>
        <end position="329"/>
    </location>
</feature>
<feature type="transmembrane region" description="Helical" evidence="1">
    <location>
        <begin position="336"/>
        <end position="358"/>
    </location>
</feature>
<feature type="transmembrane region" description="Helical" evidence="1">
    <location>
        <begin position="368"/>
        <end position="390"/>
    </location>
</feature>
<feature type="transmembrane region" description="Helical" evidence="1">
    <location>
        <begin position="403"/>
        <end position="422"/>
    </location>
</feature>
<feature type="transmembrane region" description="Helical" evidence="1">
    <location>
        <begin position="437"/>
        <end position="459"/>
    </location>
</feature>
<feature type="transmembrane region" description="Helical" evidence="1">
    <location>
        <begin position="479"/>
        <end position="496"/>
    </location>
</feature>
<feature type="transmembrane region" description="Helical" evidence="1">
    <location>
        <begin position="511"/>
        <end position="533"/>
    </location>
</feature>
<feature type="region of interest" description="Disordered" evidence="2">
    <location>
        <begin position="1"/>
        <end position="41"/>
    </location>
</feature>
<feature type="region of interest" description="Disordered" evidence="2">
    <location>
        <begin position="91"/>
        <end position="120"/>
    </location>
</feature>
<feature type="compositionally biased region" description="Low complexity" evidence="2">
    <location>
        <begin position="1"/>
        <end position="22"/>
    </location>
</feature>
<sequence length="543" mass="57944">MNSNTPSSDNSSPDNVSPDTSDMASAGDDSALATPPPRPSLWKDMTTNEDWWAIWCAALLLLIAFAAVWIGQPENLSELIAGSTMEEVSQVETAPENAGPSAEAENEAIETENTAPAENADLEVAETQEVAEEEPYEYASPLKPFLAKPGKWTANPLDAISSSWSGILGVFLIIAALFAFANQMRGKSAGAFLAAFPVIFLLATLAYWMSGQSVVKAYNLEYALWALLVGLIISNTVGTPDFLRPAISTEFYIKTGLVLLGAEVLMSRLLALGLPGVFVAWLVTPVVLITTYWFGQKVLKIQSKSLNMVISADMSVCGVSAAIATAAACKAKKEELSLSIGLSLGFTVIMMAVMPAVITAMGIDPILGGAWLGGTIDSTGAVAAAGAVLGDEALEVAATVKMIQNILIGVTAFCVAIYWVTFVERDPAGPRIGISEIWYRFPKFVLGFVSMSILFSILYSYMTNGPELINAMIGGSTKTLRGWFFCLAFVSIGLETNFRQLLPQLKGGKPLVLYVCGQSLNLVLTLVMAYLMFKVVFADTVAP</sequence>
<keyword id="KW-1003">Cell membrane</keyword>
<keyword id="KW-0472">Membrane</keyword>
<keyword id="KW-1185">Reference proteome</keyword>
<keyword id="KW-0812">Transmembrane</keyword>
<keyword id="KW-1133">Transmembrane helix</keyword>
<name>Y9488_RHOBA</name>
<dbReference type="EMBL" id="BX294149">
    <property type="protein sequence ID" value="CAD76294.1"/>
    <property type="molecule type" value="Genomic_DNA"/>
</dbReference>
<dbReference type="RefSeq" id="NP_868909.1">
    <property type="nucleotide sequence ID" value="NC_005027.1"/>
</dbReference>
<dbReference type="FunCoup" id="Q7ULI3">
    <property type="interactions" value="65"/>
</dbReference>
<dbReference type="STRING" id="243090.RB9488"/>
<dbReference type="EnsemblBacteria" id="CAD76294">
    <property type="protein sequence ID" value="CAD76294"/>
    <property type="gene ID" value="RB9488"/>
</dbReference>
<dbReference type="KEGG" id="rba:RB9488"/>
<dbReference type="PATRIC" id="fig|243090.15.peg.4546"/>
<dbReference type="eggNOG" id="COG2855">
    <property type="taxonomic scope" value="Bacteria"/>
</dbReference>
<dbReference type="HOGENOM" id="CLU_033541_6_0_0"/>
<dbReference type="InParanoid" id="Q7ULI3"/>
<dbReference type="OrthoDB" id="9766798at2"/>
<dbReference type="Proteomes" id="UP000001025">
    <property type="component" value="Chromosome"/>
</dbReference>
<dbReference type="GO" id="GO:0005886">
    <property type="term" value="C:plasma membrane"/>
    <property type="evidence" value="ECO:0000318"/>
    <property type="project" value="GO_Central"/>
</dbReference>
<dbReference type="InterPro" id="IPR018383">
    <property type="entry name" value="UPF0324_pro"/>
</dbReference>
<dbReference type="PANTHER" id="PTHR30106">
    <property type="entry name" value="INNER MEMBRANE PROTEIN YEIH-RELATED"/>
    <property type="match status" value="1"/>
</dbReference>
<dbReference type="PANTHER" id="PTHR30106:SF1">
    <property type="entry name" value="UPF0324 MEMBRANE PROTEIN FN0533"/>
    <property type="match status" value="1"/>
</dbReference>
<dbReference type="Pfam" id="PF03601">
    <property type="entry name" value="Cons_hypoth698"/>
    <property type="match status" value="1"/>
</dbReference>
<accession>Q7ULI3</accession>
<organism>
    <name type="scientific">Rhodopirellula baltica (strain DSM 10527 / NCIMB 13988 / SH1)</name>
    <dbReference type="NCBI Taxonomy" id="243090"/>
    <lineage>
        <taxon>Bacteria</taxon>
        <taxon>Pseudomonadati</taxon>
        <taxon>Planctomycetota</taxon>
        <taxon>Planctomycetia</taxon>
        <taxon>Pirellulales</taxon>
        <taxon>Pirellulaceae</taxon>
        <taxon>Rhodopirellula</taxon>
    </lineage>
</organism>
<proteinExistence type="inferred from homology"/>
<protein>
    <recommendedName>
        <fullName>UPF0324 membrane protein RB9488</fullName>
    </recommendedName>
</protein>
<evidence type="ECO:0000255" key="1"/>
<evidence type="ECO:0000256" key="2">
    <source>
        <dbReference type="SAM" id="MobiDB-lite"/>
    </source>
</evidence>
<evidence type="ECO:0000305" key="3"/>
<comment type="subcellular location">
    <subcellularLocation>
        <location evidence="3">Cell membrane</location>
        <topology evidence="3">Multi-pass membrane protein</topology>
    </subcellularLocation>
</comment>
<comment type="similarity">
    <text evidence="3">Belongs to the UPF0324 family.</text>
</comment>